<organism>
    <name type="scientific">Mycobacterium bovis (strain ATCC BAA-935 / AF2122/97)</name>
    <dbReference type="NCBI Taxonomy" id="233413"/>
    <lineage>
        <taxon>Bacteria</taxon>
        <taxon>Bacillati</taxon>
        <taxon>Actinomycetota</taxon>
        <taxon>Actinomycetes</taxon>
        <taxon>Mycobacteriales</taxon>
        <taxon>Mycobacteriaceae</taxon>
        <taxon>Mycobacterium</taxon>
        <taxon>Mycobacterium tuberculosis complex</taxon>
    </lineage>
</organism>
<accession>P63827</accession>
<accession>A0A1R3XYU3</accession>
<accession>O06148</accession>
<accession>X2BIH7</accession>
<evidence type="ECO:0000255" key="1">
    <source>
        <dbReference type="HAMAP-Rule" id="MF_00376"/>
    </source>
</evidence>
<evidence type="ECO:0000305" key="2"/>
<comment type="function">
    <text evidence="1">Catalyzes the phosphorylation of the 3'-hydroxyl group of dephosphocoenzyme A to form coenzyme A.</text>
</comment>
<comment type="catalytic activity">
    <reaction evidence="1">
        <text>3'-dephospho-CoA + ATP = ADP + CoA + H(+)</text>
        <dbReference type="Rhea" id="RHEA:18245"/>
        <dbReference type="ChEBI" id="CHEBI:15378"/>
        <dbReference type="ChEBI" id="CHEBI:30616"/>
        <dbReference type="ChEBI" id="CHEBI:57287"/>
        <dbReference type="ChEBI" id="CHEBI:57328"/>
        <dbReference type="ChEBI" id="CHEBI:456216"/>
        <dbReference type="EC" id="2.7.1.24"/>
    </reaction>
</comment>
<comment type="pathway">
    <text evidence="1">Cofactor biosynthesis; coenzyme A biosynthesis; CoA from (R)-pantothenate: step 5/5.</text>
</comment>
<comment type="subcellular location">
    <subcellularLocation>
        <location evidence="1">Cytoplasm</location>
    </subcellularLocation>
</comment>
<comment type="domain">
    <text evidence="1">The C-terminal UPF0157 domain is involved in the proper folding of the full length enzyme.</text>
</comment>
<comment type="similarity">
    <text evidence="2">In the N-terminal section; belongs to the CoaE family.</text>
</comment>
<comment type="similarity">
    <text evidence="2">In the C-terminal section; belongs to the UPF0157 (GrpB) family.</text>
</comment>
<protein>
    <recommendedName>
        <fullName evidence="1">Dephospho-CoA kinase</fullName>
        <ecNumber evidence="1">2.7.1.24</ecNumber>
    </recommendedName>
    <alternativeName>
        <fullName evidence="1">Dephosphocoenzyme A kinase</fullName>
    </alternativeName>
</protein>
<name>COAE_MYCBO</name>
<keyword id="KW-0067">ATP-binding</keyword>
<keyword id="KW-0173">Coenzyme A biosynthesis</keyword>
<keyword id="KW-0963">Cytoplasm</keyword>
<keyword id="KW-0418">Kinase</keyword>
<keyword id="KW-0547">Nucleotide-binding</keyword>
<keyword id="KW-1185">Reference proteome</keyword>
<keyword id="KW-0808">Transferase</keyword>
<gene>
    <name evidence="1" type="primary">coaE</name>
    <name type="ordered locus">BQ2027_MB1657</name>
</gene>
<proteinExistence type="inferred from homology"/>
<reference key="1">
    <citation type="journal article" date="2003" name="Proc. Natl. Acad. Sci. U.S.A.">
        <title>The complete genome sequence of Mycobacterium bovis.</title>
        <authorList>
            <person name="Garnier T."/>
            <person name="Eiglmeier K."/>
            <person name="Camus J.-C."/>
            <person name="Medina N."/>
            <person name="Mansoor H."/>
            <person name="Pryor M."/>
            <person name="Duthoy S."/>
            <person name="Grondin S."/>
            <person name="Lacroix C."/>
            <person name="Monsempe C."/>
            <person name="Simon S."/>
            <person name="Harris B."/>
            <person name="Atkin R."/>
            <person name="Doggett J."/>
            <person name="Mayes R."/>
            <person name="Keating L."/>
            <person name="Wheeler P.R."/>
            <person name="Parkhill J."/>
            <person name="Barrell B.G."/>
            <person name="Cole S.T."/>
            <person name="Gordon S.V."/>
            <person name="Hewinson R.G."/>
        </authorList>
    </citation>
    <scope>NUCLEOTIDE SEQUENCE [LARGE SCALE GENOMIC DNA]</scope>
    <source>
        <strain>ATCC BAA-935 / AF2122/97</strain>
    </source>
</reference>
<reference key="2">
    <citation type="journal article" date="2017" name="Genome Announc.">
        <title>Updated reference genome sequence and annotation of Mycobacterium bovis AF2122/97.</title>
        <authorList>
            <person name="Malone K.M."/>
            <person name="Farrell D."/>
            <person name="Stuber T.P."/>
            <person name="Schubert O.T."/>
            <person name="Aebersold R."/>
            <person name="Robbe-Austerman S."/>
            <person name="Gordon S.V."/>
        </authorList>
    </citation>
    <scope>NUCLEOTIDE SEQUENCE [LARGE SCALE GENOMIC DNA]</scope>
    <scope>GENOME REANNOTATION</scope>
    <source>
        <strain>ATCC BAA-935 / AF2122/97</strain>
    </source>
</reference>
<feature type="chain" id="PRO_0000172965" description="Dephospho-CoA kinase">
    <location>
        <begin position="1"/>
        <end position="407"/>
    </location>
</feature>
<feature type="domain" description="DPCK" evidence="1">
    <location>
        <begin position="3"/>
        <end position="204"/>
    </location>
</feature>
<feature type="region of interest" description="UPF0157">
    <location>
        <begin position="196"/>
        <end position="407"/>
    </location>
</feature>
<feature type="binding site" evidence="1">
    <location>
        <begin position="11"/>
        <end position="16"/>
    </location>
    <ligand>
        <name>ATP</name>
        <dbReference type="ChEBI" id="CHEBI:30616"/>
    </ligand>
</feature>
<sequence>MLRIGLTGGIGAGKSLLSTTFSQCGGIVVDGDVLAREVVQPGTEGLASLVDAFGRDILLADGALDRQALAAKAFRDDESRGVLNGIVHPLVARRRSEIIAAVSGDAVVVEDIPLLVESGMAPLFPLVVVVHADVELRVRRLVEQRGMAEADARARIAAQASDQQRRAVADVWLDNSGSPEDLVRRARDVWNTRVQPFAHNLAQRQIARAPARLVPADPSWPDQARRIVNRLKIACGHKALRVDHIGSTAVSGFPDFLAKDVIDIQVTVESLDVADELAEPLLAAGYPRLEHITQDTEKTDARSTVGRYDHTDSAALWHKRVHASADPGRPTNVHLRVHGWPNQQFALLFVDWLAANPGAREDYLTVKCDADRRADGELARYVTAKEPWFLDAYQRAWEWADAVHWRP</sequence>
<dbReference type="EC" id="2.7.1.24" evidence="1"/>
<dbReference type="EMBL" id="LT708304">
    <property type="protein sequence ID" value="SIU00261.1"/>
    <property type="molecule type" value="Genomic_DNA"/>
</dbReference>
<dbReference type="RefSeq" id="NP_855310.1">
    <property type="nucleotide sequence ID" value="NC_002945.3"/>
</dbReference>
<dbReference type="RefSeq" id="WP_003408069.1">
    <property type="nucleotide sequence ID" value="NC_002945.4"/>
</dbReference>
<dbReference type="SMR" id="P63827"/>
<dbReference type="KEGG" id="mbo:BQ2027_MB1657"/>
<dbReference type="PATRIC" id="fig|233413.5.peg.1808"/>
<dbReference type="UniPathway" id="UPA00241">
    <property type="reaction ID" value="UER00356"/>
</dbReference>
<dbReference type="Proteomes" id="UP000001419">
    <property type="component" value="Chromosome"/>
</dbReference>
<dbReference type="GO" id="GO:0005737">
    <property type="term" value="C:cytoplasm"/>
    <property type="evidence" value="ECO:0007669"/>
    <property type="project" value="UniProtKB-SubCell"/>
</dbReference>
<dbReference type="GO" id="GO:0005524">
    <property type="term" value="F:ATP binding"/>
    <property type="evidence" value="ECO:0007669"/>
    <property type="project" value="UniProtKB-UniRule"/>
</dbReference>
<dbReference type="GO" id="GO:0004140">
    <property type="term" value="F:dephospho-CoA kinase activity"/>
    <property type="evidence" value="ECO:0007669"/>
    <property type="project" value="UniProtKB-UniRule"/>
</dbReference>
<dbReference type="GO" id="GO:0015937">
    <property type="term" value="P:coenzyme A biosynthetic process"/>
    <property type="evidence" value="ECO:0007669"/>
    <property type="project" value="UniProtKB-UniRule"/>
</dbReference>
<dbReference type="CDD" id="cd02022">
    <property type="entry name" value="DPCK"/>
    <property type="match status" value="1"/>
</dbReference>
<dbReference type="FunFam" id="3.30.460.10:FF:000066">
    <property type="entry name" value="Dephospho-CoA kinase"/>
    <property type="match status" value="1"/>
</dbReference>
<dbReference type="Gene3D" id="3.30.460.10">
    <property type="entry name" value="Beta Polymerase, domain 2"/>
    <property type="match status" value="1"/>
</dbReference>
<dbReference type="Gene3D" id="3.40.50.300">
    <property type="entry name" value="P-loop containing nucleotide triphosphate hydrolases"/>
    <property type="match status" value="1"/>
</dbReference>
<dbReference type="HAMAP" id="MF_00376">
    <property type="entry name" value="Dephospho_CoA_kinase"/>
    <property type="match status" value="1"/>
</dbReference>
<dbReference type="InterPro" id="IPR001977">
    <property type="entry name" value="Depp_CoAkinase"/>
</dbReference>
<dbReference type="InterPro" id="IPR007344">
    <property type="entry name" value="GrpB/CoaE"/>
</dbReference>
<dbReference type="InterPro" id="IPR043519">
    <property type="entry name" value="NT_sf"/>
</dbReference>
<dbReference type="InterPro" id="IPR027417">
    <property type="entry name" value="P-loop_NTPase"/>
</dbReference>
<dbReference type="NCBIfam" id="TIGR00152">
    <property type="entry name" value="dephospho-CoA kinase"/>
    <property type="match status" value="1"/>
</dbReference>
<dbReference type="NCBIfam" id="NF002879">
    <property type="entry name" value="PRK03333.1"/>
    <property type="match status" value="1"/>
</dbReference>
<dbReference type="PANTHER" id="PTHR10695:SF46">
    <property type="entry name" value="BIFUNCTIONAL COENZYME A SYNTHASE-RELATED"/>
    <property type="match status" value="1"/>
</dbReference>
<dbReference type="PANTHER" id="PTHR10695">
    <property type="entry name" value="DEPHOSPHO-COA KINASE-RELATED"/>
    <property type="match status" value="1"/>
</dbReference>
<dbReference type="Pfam" id="PF01121">
    <property type="entry name" value="CoaE"/>
    <property type="match status" value="1"/>
</dbReference>
<dbReference type="Pfam" id="PF04229">
    <property type="entry name" value="GrpB"/>
    <property type="match status" value="1"/>
</dbReference>
<dbReference type="SUPFAM" id="SSF81301">
    <property type="entry name" value="Nucleotidyltransferase"/>
    <property type="match status" value="1"/>
</dbReference>
<dbReference type="SUPFAM" id="SSF52540">
    <property type="entry name" value="P-loop containing nucleoside triphosphate hydrolases"/>
    <property type="match status" value="1"/>
</dbReference>
<dbReference type="PROSITE" id="PS51219">
    <property type="entry name" value="DPCK"/>
    <property type="match status" value="1"/>
</dbReference>